<feature type="chain" id="PRO_0000199505" description="Multifunctional protein r">
    <location>
        <begin position="1"/>
        <end position="2224"/>
    </location>
</feature>
<feature type="domain" description="Glutamine amidotransferase type-1" evidence="9">
    <location>
        <begin position="195"/>
        <end position="380"/>
    </location>
</feature>
<feature type="domain" description="ATP-grasp 1" evidence="8">
    <location>
        <begin position="529"/>
        <end position="721"/>
    </location>
</feature>
<feature type="domain" description="ATP-grasp 2" evidence="8">
    <location>
        <begin position="1066"/>
        <end position="1257"/>
    </location>
</feature>
<feature type="domain" description="MGS-like" evidence="10">
    <location>
        <begin position="1322"/>
        <end position="1477"/>
    </location>
</feature>
<feature type="region of interest" description="GATase (Glutamine amidotransferase)" evidence="4">
    <location>
        <begin position="1"/>
        <end position="369"/>
    </location>
</feature>
<feature type="region of interest" description="Linker" evidence="4">
    <location>
        <begin position="370"/>
        <end position="415"/>
    </location>
</feature>
<feature type="region of interest" description="CPSase (Carbamoyl-phosphate synthase)" evidence="4">
    <location>
        <begin position="416"/>
        <end position="1470"/>
    </location>
</feature>
<feature type="region of interest" description="Linker" evidence="4">
    <location>
        <begin position="1471"/>
        <end position="1484"/>
    </location>
</feature>
<feature type="region of interest" description="DHOase (dihydroorotase)" evidence="4">
    <location>
        <begin position="1485"/>
        <end position="1800"/>
    </location>
</feature>
<feature type="region of interest" description="Linker" evidence="4">
    <location>
        <begin position="1801"/>
        <end position="1912"/>
    </location>
</feature>
<feature type="region of interest" description="Disordered" evidence="11">
    <location>
        <begin position="1821"/>
        <end position="1843"/>
    </location>
</feature>
<feature type="region of interest" description="ATCase (Aspartate transcarbamylase)" evidence="4">
    <location>
        <begin position="1913"/>
        <end position="2224"/>
    </location>
</feature>
<feature type="active site" description="Nucleophile; for GATase activity" evidence="9">
    <location>
        <position position="269"/>
    </location>
</feature>
<feature type="active site" description="For GATase activity" evidence="9">
    <location>
        <position position="353"/>
    </location>
</feature>
<feature type="active site" description="For GATase activity" evidence="9">
    <location>
        <position position="355"/>
    </location>
</feature>
<feature type="active site" description="For DHOase activity" evidence="2">
    <location>
        <position position="1701"/>
    </location>
</feature>
<feature type="binding site" evidence="5">
    <location>
        <position position="55"/>
    </location>
    <ligand>
        <name>L-glutamine</name>
        <dbReference type="ChEBI" id="CHEBI:58359"/>
    </ligand>
</feature>
<feature type="binding site" evidence="5">
    <location>
        <position position="240"/>
    </location>
    <ligand>
        <name>L-glutamine</name>
        <dbReference type="ChEBI" id="CHEBI:58359"/>
    </ligand>
</feature>
<feature type="binding site" evidence="5">
    <location>
        <position position="242"/>
    </location>
    <ligand>
        <name>L-glutamine</name>
        <dbReference type="ChEBI" id="CHEBI:58359"/>
    </ligand>
</feature>
<feature type="binding site" evidence="5">
    <location>
        <position position="270"/>
    </location>
    <ligand>
        <name>L-glutamine</name>
        <dbReference type="ChEBI" id="CHEBI:58359"/>
    </ligand>
</feature>
<feature type="binding site" evidence="5">
    <location>
        <position position="273"/>
    </location>
    <ligand>
        <name>L-glutamine</name>
        <dbReference type="ChEBI" id="CHEBI:58359"/>
    </ligand>
</feature>
<feature type="binding site" evidence="5">
    <location>
        <position position="311"/>
    </location>
    <ligand>
        <name>L-glutamine</name>
        <dbReference type="ChEBI" id="CHEBI:58359"/>
    </ligand>
</feature>
<feature type="binding site" evidence="5">
    <location>
        <position position="313"/>
    </location>
    <ligand>
        <name>L-glutamine</name>
        <dbReference type="ChEBI" id="CHEBI:58359"/>
    </ligand>
</feature>
<feature type="binding site" evidence="5">
    <location>
        <position position="314"/>
    </location>
    <ligand>
        <name>L-glutamine</name>
        <dbReference type="ChEBI" id="CHEBI:58359"/>
    </ligand>
</feature>
<feature type="binding site" evidence="1">
    <location>
        <position position="525"/>
    </location>
    <ligand>
        <name>ATP</name>
        <dbReference type="ChEBI" id="CHEBI:30616"/>
        <label>1</label>
    </ligand>
</feature>
<feature type="binding site" evidence="1">
    <location>
        <position position="565"/>
    </location>
    <ligand>
        <name>ATP</name>
        <dbReference type="ChEBI" id="CHEBI:30616"/>
        <label>1</label>
    </ligand>
</feature>
<feature type="binding site" evidence="1">
    <location>
        <position position="571"/>
    </location>
    <ligand>
        <name>ATP</name>
        <dbReference type="ChEBI" id="CHEBI:30616"/>
        <label>1</label>
    </ligand>
</feature>
<feature type="binding site" evidence="1">
    <location>
        <position position="572"/>
    </location>
    <ligand>
        <name>ATP</name>
        <dbReference type="ChEBI" id="CHEBI:30616"/>
        <label>1</label>
    </ligand>
</feature>
<feature type="binding site" evidence="1">
    <location>
        <position position="602"/>
    </location>
    <ligand>
        <name>ATP</name>
        <dbReference type="ChEBI" id="CHEBI:30616"/>
        <label>1</label>
    </ligand>
</feature>
<feature type="binding site" evidence="1">
    <location>
        <position position="609"/>
    </location>
    <ligand>
        <name>ATP</name>
        <dbReference type="ChEBI" id="CHEBI:30616"/>
        <label>1</label>
    </ligand>
</feature>
<feature type="binding site" evidence="1">
    <location>
        <position position="635"/>
    </location>
    <ligand>
        <name>ATP</name>
        <dbReference type="ChEBI" id="CHEBI:30616"/>
        <label>1</label>
    </ligand>
</feature>
<feature type="binding site" evidence="1">
    <location>
        <position position="636"/>
    </location>
    <ligand>
        <name>ATP</name>
        <dbReference type="ChEBI" id="CHEBI:30616"/>
        <label>1</label>
    </ligand>
</feature>
<feature type="binding site" evidence="1">
    <location>
        <position position="637"/>
    </location>
    <ligand>
        <name>ATP</name>
        <dbReference type="ChEBI" id="CHEBI:30616"/>
        <label>1</label>
    </ligand>
</feature>
<feature type="binding site" evidence="1">
    <location>
        <position position="678"/>
    </location>
    <ligand>
        <name>ATP</name>
        <dbReference type="ChEBI" id="CHEBI:30616"/>
        <label>1</label>
    </ligand>
</feature>
<feature type="binding site" evidence="8">
    <location>
        <position position="678"/>
    </location>
    <ligand>
        <name>Mg(2+)</name>
        <dbReference type="ChEBI" id="CHEBI:18420"/>
        <label>1</label>
    </ligand>
</feature>
<feature type="binding site" evidence="8">
    <location>
        <position position="678"/>
    </location>
    <ligand>
        <name>Mn(2+)</name>
        <dbReference type="ChEBI" id="CHEBI:29035"/>
        <label>1</label>
    </ligand>
</feature>
<feature type="binding site" evidence="1">
    <location>
        <position position="692"/>
    </location>
    <ligand>
        <name>ATP</name>
        <dbReference type="ChEBI" id="CHEBI:30616"/>
        <label>1</label>
    </ligand>
</feature>
<feature type="binding site" evidence="8">
    <location>
        <position position="692"/>
    </location>
    <ligand>
        <name>Mg(2+)</name>
        <dbReference type="ChEBI" id="CHEBI:18420"/>
        <label>1</label>
    </ligand>
</feature>
<feature type="binding site" evidence="8">
    <location>
        <position position="692"/>
    </location>
    <ligand>
        <name>Mg(2+)</name>
        <dbReference type="ChEBI" id="CHEBI:18420"/>
        <label>2</label>
    </ligand>
</feature>
<feature type="binding site" evidence="8">
    <location>
        <position position="692"/>
    </location>
    <ligand>
        <name>Mn(2+)</name>
        <dbReference type="ChEBI" id="CHEBI:29035"/>
        <label>1</label>
    </ligand>
</feature>
<feature type="binding site" evidence="8">
    <location>
        <position position="692"/>
    </location>
    <ligand>
        <name>Mn(2+)</name>
        <dbReference type="ChEBI" id="CHEBI:29035"/>
        <label>2</label>
    </ligand>
</feature>
<feature type="binding site" evidence="8">
    <location>
        <position position="694"/>
    </location>
    <ligand>
        <name>Mg(2+)</name>
        <dbReference type="ChEBI" id="CHEBI:18420"/>
        <label>2</label>
    </ligand>
</feature>
<feature type="binding site" evidence="8">
    <location>
        <position position="694"/>
    </location>
    <ligand>
        <name>Mn(2+)</name>
        <dbReference type="ChEBI" id="CHEBI:29035"/>
        <label>2</label>
    </ligand>
</feature>
<feature type="binding site" evidence="1">
    <location>
        <position position="1102"/>
    </location>
    <ligand>
        <name>ATP</name>
        <dbReference type="ChEBI" id="CHEBI:30616"/>
        <label>2</label>
    </ligand>
</feature>
<feature type="binding site" evidence="1">
    <location>
        <position position="1141"/>
    </location>
    <ligand>
        <name>ATP</name>
        <dbReference type="ChEBI" id="CHEBI:30616"/>
        <label>2</label>
    </ligand>
</feature>
<feature type="binding site" evidence="1">
    <location>
        <position position="1143"/>
    </location>
    <ligand>
        <name>ATP</name>
        <dbReference type="ChEBI" id="CHEBI:30616"/>
        <label>2</label>
    </ligand>
</feature>
<feature type="binding site" evidence="1">
    <location>
        <position position="1148"/>
    </location>
    <ligand>
        <name>ATP</name>
        <dbReference type="ChEBI" id="CHEBI:30616"/>
        <label>2</label>
    </ligand>
</feature>
<feature type="binding site" evidence="1">
    <location>
        <position position="1173"/>
    </location>
    <ligand>
        <name>ATP</name>
        <dbReference type="ChEBI" id="CHEBI:30616"/>
        <label>2</label>
    </ligand>
</feature>
<feature type="binding site" evidence="1">
    <location>
        <position position="1174"/>
    </location>
    <ligand>
        <name>ATP</name>
        <dbReference type="ChEBI" id="CHEBI:30616"/>
        <label>2</label>
    </ligand>
</feature>
<feature type="binding site" evidence="1">
    <location>
        <position position="1175"/>
    </location>
    <ligand>
        <name>ATP</name>
        <dbReference type="ChEBI" id="CHEBI:30616"/>
        <label>2</label>
    </ligand>
</feature>
<feature type="binding site" evidence="1">
    <location>
        <position position="1176"/>
    </location>
    <ligand>
        <name>ATP</name>
        <dbReference type="ChEBI" id="CHEBI:30616"/>
        <label>2</label>
    </ligand>
</feature>
<feature type="binding site" evidence="1">
    <location>
        <position position="1216"/>
    </location>
    <ligand>
        <name>ATP</name>
        <dbReference type="ChEBI" id="CHEBI:30616"/>
        <label>2</label>
    </ligand>
</feature>
<feature type="binding site" evidence="8">
    <location>
        <position position="1216"/>
    </location>
    <ligand>
        <name>Mg(2+)</name>
        <dbReference type="ChEBI" id="CHEBI:18420"/>
        <label>3</label>
    </ligand>
</feature>
<feature type="binding site" evidence="8">
    <location>
        <position position="1216"/>
    </location>
    <ligand>
        <name>Mn(2+)</name>
        <dbReference type="ChEBI" id="CHEBI:29035"/>
        <label>3</label>
    </ligand>
</feature>
<feature type="binding site" evidence="1">
    <location>
        <position position="1228"/>
    </location>
    <ligand>
        <name>ATP</name>
        <dbReference type="ChEBI" id="CHEBI:30616"/>
        <label>2</label>
    </ligand>
</feature>
<feature type="binding site" evidence="8">
    <location>
        <position position="1228"/>
    </location>
    <ligand>
        <name>Mg(2+)</name>
        <dbReference type="ChEBI" id="CHEBI:18420"/>
        <label>3</label>
    </ligand>
</feature>
<feature type="binding site" evidence="8">
    <location>
        <position position="1228"/>
    </location>
    <ligand>
        <name>Mg(2+)</name>
        <dbReference type="ChEBI" id="CHEBI:18420"/>
        <label>4</label>
    </ligand>
</feature>
<feature type="binding site" evidence="8">
    <location>
        <position position="1228"/>
    </location>
    <ligand>
        <name>Mn(2+)</name>
        <dbReference type="ChEBI" id="CHEBI:29035"/>
        <label>3</label>
    </ligand>
</feature>
<feature type="binding site" evidence="8">
    <location>
        <position position="1228"/>
    </location>
    <ligand>
        <name>Mn(2+)</name>
        <dbReference type="ChEBI" id="CHEBI:29035"/>
        <label>4</label>
    </ligand>
</feature>
<feature type="binding site" evidence="8">
    <location>
        <position position="1230"/>
    </location>
    <ligand>
        <name>Mg(2+)</name>
        <dbReference type="ChEBI" id="CHEBI:18420"/>
        <label>4</label>
    </ligand>
</feature>
<feature type="binding site" evidence="8">
    <location>
        <position position="1230"/>
    </location>
    <ligand>
        <name>Mn(2+)</name>
        <dbReference type="ChEBI" id="CHEBI:29035"/>
        <label>4</label>
    </ligand>
</feature>
<feature type="binding site" evidence="7">
    <location>
        <position position="1486"/>
    </location>
    <ligand>
        <name>Zn(2+)</name>
        <dbReference type="ChEBI" id="CHEBI:29105"/>
        <label>1</label>
    </ligand>
</feature>
<feature type="binding site" evidence="7">
    <location>
        <position position="1486"/>
    </location>
    <ligand>
        <name>Zn(2+)</name>
        <dbReference type="ChEBI" id="CHEBI:29105"/>
        <label>2</label>
    </ligand>
</feature>
<feature type="binding site" evidence="7">
    <location>
        <position position="1488"/>
    </location>
    <ligand>
        <name>Zn(2+)</name>
        <dbReference type="ChEBI" id="CHEBI:29105"/>
        <label>1</label>
    </ligand>
</feature>
<feature type="binding site" evidence="7">
    <location>
        <position position="1490"/>
    </location>
    <ligand>
        <name>(S)-dihydroorotate</name>
        <dbReference type="ChEBI" id="CHEBI:30864"/>
    </ligand>
</feature>
<feature type="binding site" evidence="7">
    <location>
        <position position="1520"/>
    </location>
    <ligand>
        <name>(S)-dihydroorotate</name>
        <dbReference type="ChEBI" id="CHEBI:30864"/>
    </ligand>
</feature>
<feature type="binding site" description="via carbamate group" evidence="7">
    <location>
        <position position="1571"/>
    </location>
    <ligand>
        <name>Zn(2+)</name>
        <dbReference type="ChEBI" id="CHEBI:29105"/>
        <label>1</label>
    </ligand>
</feature>
<feature type="binding site" description="via carbamate group" evidence="7">
    <location>
        <position position="1571"/>
    </location>
    <ligand>
        <name>Zn(2+)</name>
        <dbReference type="ChEBI" id="CHEBI:29105"/>
        <label>3</label>
    </ligand>
</feature>
<feature type="binding site" evidence="7">
    <location>
        <position position="1605"/>
    </location>
    <ligand>
        <name>Zn(2+)</name>
        <dbReference type="ChEBI" id="CHEBI:29105"/>
        <label>3</label>
    </ligand>
</feature>
<feature type="binding site" evidence="7">
    <location>
        <position position="1628"/>
    </location>
    <ligand>
        <name>Zn(2+)</name>
        <dbReference type="ChEBI" id="CHEBI:29105"/>
        <label>2</label>
    </ligand>
</feature>
<feature type="binding site" evidence="7">
    <location>
        <position position="1629"/>
    </location>
    <ligand>
        <name>Zn(2+)</name>
        <dbReference type="ChEBI" id="CHEBI:29105"/>
        <label>3</label>
    </ligand>
</feature>
<feature type="binding site" evidence="7">
    <location>
        <position position="1652"/>
    </location>
    <ligand>
        <name>Zn(2+)</name>
        <dbReference type="ChEBI" id="CHEBI:29105"/>
        <label>2</label>
    </ligand>
</feature>
<feature type="binding site" evidence="7">
    <location>
        <position position="1676"/>
    </location>
    <ligand>
        <name>(S)-dihydroorotate</name>
        <dbReference type="ChEBI" id="CHEBI:30864"/>
    </ligand>
</feature>
<feature type="binding site" evidence="7">
    <location>
        <position position="1701"/>
    </location>
    <ligand>
        <name>Zn(2+)</name>
        <dbReference type="ChEBI" id="CHEBI:29105"/>
        <label>1</label>
    </ligand>
</feature>
<feature type="binding site" evidence="7">
    <location>
        <position position="1705"/>
    </location>
    <ligand>
        <name>(S)-dihydroorotate</name>
        <dbReference type="ChEBI" id="CHEBI:30864"/>
    </ligand>
</feature>
<feature type="binding site" evidence="7">
    <location>
        <position position="1717"/>
    </location>
    <ligand>
        <name>(S)-dihydroorotate</name>
        <dbReference type="ChEBI" id="CHEBI:30864"/>
    </ligand>
</feature>
<feature type="binding site" evidence="6">
    <location>
        <position position="1970"/>
    </location>
    <ligand>
        <name>carbamoyl phosphate</name>
        <dbReference type="ChEBI" id="CHEBI:58228"/>
    </ligand>
</feature>
<feature type="binding site" evidence="6">
    <location>
        <position position="1971"/>
    </location>
    <ligand>
        <name>carbamoyl phosphate</name>
        <dbReference type="ChEBI" id="CHEBI:58228"/>
    </ligand>
</feature>
<feature type="binding site" evidence="6">
    <location>
        <position position="1998"/>
    </location>
    <ligand>
        <name>L-aspartate</name>
        <dbReference type="ChEBI" id="CHEBI:29991"/>
    </ligand>
</feature>
<feature type="binding site" evidence="6">
    <location>
        <position position="2019"/>
    </location>
    <ligand>
        <name>carbamoyl phosphate</name>
        <dbReference type="ChEBI" id="CHEBI:58228"/>
    </ligand>
</feature>
<feature type="binding site" evidence="6">
    <location>
        <position position="2047"/>
    </location>
    <ligand>
        <name>carbamoyl phosphate</name>
        <dbReference type="ChEBI" id="CHEBI:58228"/>
    </ligand>
</feature>
<feature type="binding site" evidence="6">
    <location>
        <position position="2050"/>
    </location>
    <ligand>
        <name>carbamoyl phosphate</name>
        <dbReference type="ChEBI" id="CHEBI:58228"/>
    </ligand>
</feature>
<feature type="binding site" evidence="6">
    <location>
        <position position="2080"/>
    </location>
    <ligand>
        <name>L-aspartate</name>
        <dbReference type="ChEBI" id="CHEBI:29991"/>
    </ligand>
</feature>
<feature type="binding site" evidence="6">
    <location>
        <position position="2141"/>
    </location>
    <ligand>
        <name>L-aspartate</name>
        <dbReference type="ChEBI" id="CHEBI:29991"/>
    </ligand>
</feature>
<feature type="binding site" evidence="6">
    <location>
        <position position="2180"/>
    </location>
    <ligand>
        <name>carbamoyl phosphate</name>
        <dbReference type="ChEBI" id="CHEBI:58228"/>
    </ligand>
</feature>
<feature type="binding site" evidence="6">
    <location>
        <position position="2181"/>
    </location>
    <ligand>
        <name>carbamoyl phosphate</name>
        <dbReference type="ChEBI" id="CHEBI:58228"/>
    </ligand>
</feature>
<feature type="modified residue" description="N6-carboxylysine" evidence="7">
    <location>
        <position position="1571"/>
    </location>
</feature>
<feature type="modified residue" description="Phosphoserine" evidence="13">
    <location>
        <position position="1883"/>
    </location>
</feature>
<feature type="modified residue" description="Phosphoserine" evidence="13">
    <location>
        <position position="1885"/>
    </location>
</feature>
<feature type="modified residue" description="Phosphoserine" evidence="13">
    <location>
        <position position="1892"/>
    </location>
</feature>
<feature type="modified residue" description="Phosphoserine" evidence="13">
    <location>
        <position position="1894"/>
    </location>
</feature>
<feature type="mutagenesis site" description="Severely diminishes UTP inhibition of CPSase; in Su(b)." evidence="12">
    <original>E</original>
    <variation>K</variation>
    <location>
        <position position="1167"/>
    </location>
</feature>
<feature type="sequence conflict" description="In Ref. 2; CAA27509." evidence="14" ref="2">
    <original>F</original>
    <variation>V</variation>
    <location>
        <position position="34"/>
    </location>
</feature>
<feature type="sequence conflict" description="In Ref. 2; CAA27509." evidence="14" ref="2">
    <original>G</original>
    <variation>A</variation>
    <location>
        <position position="58"/>
    </location>
</feature>
<feature type="sequence conflict" description="In Ref. 2; CAA27509." evidence="14" ref="2">
    <original>RN</original>
    <variation>QD</variation>
    <location>
        <begin position="172"/>
        <end position="173"/>
    </location>
</feature>
<feature type="sequence conflict" description="In Ref. 2; CAA27509." evidence="14" ref="2">
    <original>LL</original>
    <variation>FV</variation>
    <location>
        <begin position="220"/>
        <end position="221"/>
    </location>
</feature>
<feature type="sequence conflict" description="In Ref. 2; CAA27509." evidence="14" ref="2">
    <original>Y</original>
    <variation>I</variation>
    <location>
        <position position="288"/>
    </location>
</feature>
<feature type="sequence conflict" description="In Ref. 2; CAA27509." evidence="14" ref="2">
    <original>P</original>
    <variation>L</variation>
    <location>
        <position position="394"/>
    </location>
</feature>
<feature type="sequence conflict" description="In Ref. 2; CAA27513." evidence="14" ref="2">
    <original>S</original>
    <variation>L</variation>
    <location>
        <position position="2192"/>
    </location>
</feature>
<feature type="sequence conflict" description="In Ref. 2; CAA27513." evidence="14" ref="2">
    <original>TAL</original>
    <variation>RRS</variation>
    <location>
        <begin position="2222"/>
        <end position="2224"/>
    </location>
</feature>
<dbReference type="EC" id="6.3.5.5" evidence="12"/>
<dbReference type="EC" id="3.5.1.2" evidence="3"/>
<dbReference type="EC" id="6.3.4.16" evidence="3"/>
<dbReference type="EC" id="2.1.3.2" evidence="7"/>
<dbReference type="EC" id="3.5.2.3" evidence="7"/>
<dbReference type="EMBL" id="X04813">
    <property type="protein sequence ID" value="CAA28502.1"/>
    <property type="status" value="ALT_SEQ"/>
    <property type="molecule type" value="Genomic_DNA"/>
</dbReference>
<dbReference type="EMBL" id="X03875">
    <property type="protein sequence ID" value="CAA27509.1"/>
    <property type="status" value="ALT_SEQ"/>
    <property type="molecule type" value="Genomic_DNA"/>
</dbReference>
<dbReference type="EMBL" id="X03876">
    <property type="protein sequence ID" value="CAA27510.1"/>
    <property type="status" value="ALT_SEQ"/>
    <property type="molecule type" value="Genomic_DNA"/>
</dbReference>
<dbReference type="EMBL" id="X03877">
    <property type="protein sequence ID" value="CAA27511.1"/>
    <property type="status" value="ALT_SEQ"/>
    <property type="molecule type" value="Genomic_DNA"/>
</dbReference>
<dbReference type="EMBL" id="X03878">
    <property type="protein sequence ID" value="CAA27512.1"/>
    <property type="molecule type" value="Genomic_DNA"/>
</dbReference>
<dbReference type="EMBL" id="X03879">
    <property type="protein sequence ID" value="CAA27513.1"/>
    <property type="status" value="ALT_SEQ"/>
    <property type="molecule type" value="Genomic_DNA"/>
</dbReference>
<dbReference type="EMBL" id="AE014298">
    <property type="protein sequence ID" value="AAF48639.3"/>
    <property type="molecule type" value="Genomic_DNA"/>
</dbReference>
<dbReference type="EMBL" id="AE014298">
    <property type="protein sequence ID" value="AAS65389.2"/>
    <property type="molecule type" value="Genomic_DNA"/>
</dbReference>
<dbReference type="EMBL" id="BT046159">
    <property type="protein sequence ID" value="ACI46547.1"/>
    <property type="molecule type" value="mRNA"/>
</dbReference>
<dbReference type="EMBL" id="M37783">
    <property type="protein sequence ID" value="AAA28873.1"/>
    <property type="status" value="ALT_SEQ"/>
    <property type="molecule type" value="Genomic_DNA"/>
</dbReference>
<dbReference type="EMBL" id="AY089560">
    <property type="protein sequence ID" value="AAL90298.1"/>
    <property type="status" value="ALT_INIT"/>
    <property type="molecule type" value="mRNA"/>
</dbReference>
<dbReference type="EMBL" id="AF129814">
    <property type="protein sequence ID" value="AAD18071.1"/>
    <property type="molecule type" value="mRNA"/>
</dbReference>
<dbReference type="EMBL" id="S74010">
    <property type="protein sequence ID" value="AAB32204.1"/>
    <property type="molecule type" value="mRNA"/>
</dbReference>
<dbReference type="PIR" id="A29106">
    <property type="entry name" value="QZFF"/>
</dbReference>
<dbReference type="RefSeq" id="NP_001285343.1">
    <property type="nucleotide sequence ID" value="NM_001298414.1"/>
</dbReference>
<dbReference type="RefSeq" id="NP_523377.1">
    <property type="nucleotide sequence ID" value="NM_078653.2"/>
</dbReference>
<dbReference type="RefSeq" id="NP_996488.2">
    <property type="nucleotide sequence ID" value="NM_206765.3"/>
</dbReference>
<dbReference type="SMR" id="P05990"/>
<dbReference type="BioGRID" id="58976">
    <property type="interactions" value="40"/>
</dbReference>
<dbReference type="FunCoup" id="P05990">
    <property type="interactions" value="1898"/>
</dbReference>
<dbReference type="IntAct" id="P05990">
    <property type="interactions" value="39"/>
</dbReference>
<dbReference type="MINT" id="P05990"/>
<dbReference type="STRING" id="7227.FBpp0088675"/>
<dbReference type="MEROPS" id="C26.952"/>
<dbReference type="MEROPS" id="C26.956"/>
<dbReference type="MEROPS" id="M38.972"/>
<dbReference type="iPTMnet" id="P05990"/>
<dbReference type="PaxDb" id="7227-FBpp0088675"/>
<dbReference type="EnsemblMetazoa" id="FBtr0089734">
    <property type="protein sequence ID" value="FBpp0088675"/>
    <property type="gene ID" value="FBgn0003189"/>
</dbReference>
<dbReference type="EnsemblMetazoa" id="FBtr0340155">
    <property type="protein sequence ID" value="FBpp0309141"/>
    <property type="gene ID" value="FBgn0003189"/>
</dbReference>
<dbReference type="EnsemblMetazoa" id="FBtr0340156">
    <property type="protein sequence ID" value="FBpp0309142"/>
    <property type="gene ID" value="FBgn0003189"/>
</dbReference>
<dbReference type="GeneID" id="32640"/>
<dbReference type="KEGG" id="dme:Dmel_CG18572"/>
<dbReference type="AGR" id="FB:FBgn0003189"/>
<dbReference type="CTD" id="32640"/>
<dbReference type="FlyBase" id="FBgn0003189">
    <property type="gene designation" value="r"/>
</dbReference>
<dbReference type="VEuPathDB" id="VectorBase:FBgn0003189"/>
<dbReference type="eggNOG" id="KOG0370">
    <property type="taxonomic scope" value="Eukaryota"/>
</dbReference>
<dbReference type="HOGENOM" id="CLU_000513_2_1_1"/>
<dbReference type="InParanoid" id="P05990"/>
<dbReference type="OMA" id="WSPFNGK"/>
<dbReference type="OrthoDB" id="434at2759"/>
<dbReference type="PhylomeDB" id="P05990"/>
<dbReference type="BRENDA" id="6.3.5.5">
    <property type="organism ID" value="1994"/>
</dbReference>
<dbReference type="Reactome" id="R-DME-500753">
    <property type="pathway name" value="Pyrimidine biosynthesis"/>
</dbReference>
<dbReference type="UniPathway" id="UPA00070">
    <property type="reaction ID" value="UER00115"/>
</dbReference>
<dbReference type="UniPathway" id="UPA00070">
    <property type="reaction ID" value="UER00116"/>
</dbReference>
<dbReference type="UniPathway" id="UPA00070">
    <property type="reaction ID" value="UER00117"/>
</dbReference>
<dbReference type="BioGRID-ORCS" id="32640">
    <property type="hits" value="1 hit in 3 CRISPR screens"/>
</dbReference>
<dbReference type="ChiTaRS" id="r">
    <property type="organism name" value="fly"/>
</dbReference>
<dbReference type="GenomeRNAi" id="32640"/>
<dbReference type="PRO" id="PR:P05990"/>
<dbReference type="Proteomes" id="UP000000803">
    <property type="component" value="Chromosome X"/>
</dbReference>
<dbReference type="Bgee" id="FBgn0003189">
    <property type="expression patterns" value="Expressed in germline cell (Drosophila) in post-embryonic organism and 38 other cell types or tissues"/>
</dbReference>
<dbReference type="ExpressionAtlas" id="P05990">
    <property type="expression patterns" value="baseline and differential"/>
</dbReference>
<dbReference type="GO" id="GO:0005737">
    <property type="term" value="C:cytoplasm"/>
    <property type="evidence" value="ECO:0000318"/>
    <property type="project" value="GO_Central"/>
</dbReference>
<dbReference type="GO" id="GO:0005829">
    <property type="term" value="C:cytosol"/>
    <property type="evidence" value="ECO:0000318"/>
    <property type="project" value="GO_Central"/>
</dbReference>
<dbReference type="GO" id="GO:0016597">
    <property type="term" value="F:amino acid binding"/>
    <property type="evidence" value="ECO:0007669"/>
    <property type="project" value="InterPro"/>
</dbReference>
<dbReference type="GO" id="GO:0004070">
    <property type="term" value="F:aspartate carbamoyltransferase activity"/>
    <property type="evidence" value="ECO:0000314"/>
    <property type="project" value="FlyBase"/>
</dbReference>
<dbReference type="GO" id="GO:0005524">
    <property type="term" value="F:ATP binding"/>
    <property type="evidence" value="ECO:0000305"/>
    <property type="project" value="FlyBase"/>
</dbReference>
<dbReference type="GO" id="GO:0004087">
    <property type="term" value="F:carbamoyl-phosphate synthase (ammonia) activity"/>
    <property type="evidence" value="ECO:0007669"/>
    <property type="project" value="RHEA"/>
</dbReference>
<dbReference type="GO" id="GO:0004088">
    <property type="term" value="F:carbamoyl-phosphate synthase (glutamine-hydrolyzing) activity"/>
    <property type="evidence" value="ECO:0000314"/>
    <property type="project" value="FlyBase"/>
</dbReference>
<dbReference type="GO" id="GO:0004151">
    <property type="term" value="F:dihydroorotase activity"/>
    <property type="evidence" value="ECO:0000314"/>
    <property type="project" value="FlyBase"/>
</dbReference>
<dbReference type="GO" id="GO:0004359">
    <property type="term" value="F:glutaminase activity"/>
    <property type="evidence" value="ECO:0007669"/>
    <property type="project" value="RHEA"/>
</dbReference>
<dbReference type="GO" id="GO:0070406">
    <property type="term" value="F:glutamine binding"/>
    <property type="evidence" value="ECO:0000305"/>
    <property type="project" value="FlyBase"/>
</dbReference>
<dbReference type="GO" id="GO:0046872">
    <property type="term" value="F:metal ion binding"/>
    <property type="evidence" value="ECO:0007669"/>
    <property type="project" value="UniProtKB-KW"/>
</dbReference>
<dbReference type="GO" id="GO:0006207">
    <property type="term" value="P:'de novo' pyrimidine nucleobase biosynthetic process"/>
    <property type="evidence" value="ECO:0000315"/>
    <property type="project" value="FlyBase"/>
</dbReference>
<dbReference type="GO" id="GO:0044205">
    <property type="term" value="P:'de novo' UMP biosynthetic process"/>
    <property type="evidence" value="ECO:0007669"/>
    <property type="project" value="UniProtKB-UniPathway"/>
</dbReference>
<dbReference type="GO" id="GO:0006541">
    <property type="term" value="P:glutamine metabolic process"/>
    <property type="evidence" value="ECO:0000315"/>
    <property type="project" value="FlyBase"/>
</dbReference>
<dbReference type="CDD" id="cd01316">
    <property type="entry name" value="CAD_DHOase"/>
    <property type="match status" value="1"/>
</dbReference>
<dbReference type="CDD" id="cd01744">
    <property type="entry name" value="GATase1_CPSase"/>
    <property type="match status" value="1"/>
</dbReference>
<dbReference type="CDD" id="cd01423">
    <property type="entry name" value="MGS_CPS_I_III"/>
    <property type="match status" value="1"/>
</dbReference>
<dbReference type="FunFam" id="3.40.50.1370:FF:000002">
    <property type="entry name" value="Aspartate carbamoyltransferase 2"/>
    <property type="match status" value="1"/>
</dbReference>
<dbReference type="FunFam" id="3.40.50.1370:FF:000005">
    <property type="entry name" value="CAD protein-like isoform X1"/>
    <property type="match status" value="1"/>
</dbReference>
<dbReference type="FunFam" id="3.40.50.1380:FF:000005">
    <property type="entry name" value="CAD protein-like isoform X1"/>
    <property type="match status" value="1"/>
</dbReference>
<dbReference type="FunFam" id="3.30.470.20:FF:000004">
    <property type="entry name" value="Carbamoyl-phosphate synthase (glutamine-hydrolyzing)"/>
    <property type="match status" value="1"/>
</dbReference>
<dbReference type="FunFam" id="3.40.50.20:FF:000012">
    <property type="entry name" value="Carbamoyl-phosphate synthase 1, mitochondrial"/>
    <property type="match status" value="1"/>
</dbReference>
<dbReference type="FunFam" id="3.40.50.880:FF:000006">
    <property type="entry name" value="Carbamoyl-phosphate synthase 1, mitochondrial"/>
    <property type="match status" value="1"/>
</dbReference>
<dbReference type="FunFam" id="1.10.1030.10:FF:000002">
    <property type="entry name" value="Carbamoyl-phosphate synthase large chain"/>
    <property type="match status" value="1"/>
</dbReference>
<dbReference type="FunFam" id="3.30.1490.20:FF:000001">
    <property type="entry name" value="Carbamoyl-phosphate synthase large chain"/>
    <property type="match status" value="1"/>
</dbReference>
<dbReference type="FunFam" id="3.30.470.20:FF:000001">
    <property type="entry name" value="Carbamoyl-phosphate synthase large chain"/>
    <property type="match status" value="1"/>
</dbReference>
<dbReference type="FunFam" id="3.40.50.20:FF:000002">
    <property type="entry name" value="Carbamoyl-phosphate synthase large chain"/>
    <property type="match status" value="1"/>
</dbReference>
<dbReference type="FunFam" id="3.20.20.140:FF:000198">
    <property type="entry name" value="Rudimentary, isoform D"/>
    <property type="match status" value="1"/>
</dbReference>
<dbReference type="Gene3D" id="3.40.50.20">
    <property type="match status" value="2"/>
</dbReference>
<dbReference type="Gene3D" id="3.40.50.880">
    <property type="match status" value="1"/>
</dbReference>
<dbReference type="Gene3D" id="3.40.50.1370">
    <property type="entry name" value="Aspartate/ornithine carbamoyltransferase"/>
    <property type="match status" value="2"/>
</dbReference>
<dbReference type="Gene3D" id="3.30.1490.20">
    <property type="entry name" value="ATP-grasp fold, A domain"/>
    <property type="match status" value="1"/>
</dbReference>
<dbReference type="Gene3D" id="3.30.470.20">
    <property type="entry name" value="ATP-grasp fold, B domain"/>
    <property type="match status" value="2"/>
</dbReference>
<dbReference type="Gene3D" id="3.50.30.20">
    <property type="entry name" value="Carbamoyl-phosphate synthase small subunit, N-terminal domain"/>
    <property type="match status" value="1"/>
</dbReference>
<dbReference type="Gene3D" id="1.10.1030.10">
    <property type="entry name" value="Carbamoyl-phosphate synthetase, large subunit oligomerisation domain"/>
    <property type="match status" value="1"/>
</dbReference>
<dbReference type="Gene3D" id="3.20.20.140">
    <property type="entry name" value="Metal-dependent hydrolases"/>
    <property type="match status" value="1"/>
</dbReference>
<dbReference type="Gene3D" id="3.40.50.1380">
    <property type="entry name" value="Methylglyoxal synthase-like domain"/>
    <property type="match status" value="1"/>
</dbReference>
<dbReference type="HAMAP" id="MF_00001">
    <property type="entry name" value="Asp_carb_tr"/>
    <property type="match status" value="1"/>
</dbReference>
<dbReference type="HAMAP" id="MF_01209">
    <property type="entry name" value="CPSase_S_chain"/>
    <property type="match status" value="1"/>
</dbReference>
<dbReference type="InterPro" id="IPR006680">
    <property type="entry name" value="Amidohydro-rel"/>
</dbReference>
<dbReference type="InterPro" id="IPR006132">
    <property type="entry name" value="Asp/Orn_carbamoyltranf_P-bd"/>
</dbReference>
<dbReference type="InterPro" id="IPR006130">
    <property type="entry name" value="Asp/Orn_carbamoylTrfase"/>
</dbReference>
<dbReference type="InterPro" id="IPR036901">
    <property type="entry name" value="Asp/Orn_carbamoylTrfase_sf"/>
</dbReference>
<dbReference type="InterPro" id="IPR002082">
    <property type="entry name" value="Asp_carbamoyltransf"/>
</dbReference>
<dbReference type="InterPro" id="IPR006131">
    <property type="entry name" value="Asp_carbamoyltransf_Asp/Orn-bd"/>
</dbReference>
<dbReference type="InterPro" id="IPR011761">
    <property type="entry name" value="ATP-grasp"/>
</dbReference>
<dbReference type="InterPro" id="IPR013815">
    <property type="entry name" value="ATP_grasp_subdomain_1"/>
</dbReference>
<dbReference type="InterPro" id="IPR006275">
    <property type="entry name" value="CarbamoylP_synth_lsu"/>
</dbReference>
<dbReference type="InterPro" id="IPR005480">
    <property type="entry name" value="CarbamoylP_synth_lsu_oligo"/>
</dbReference>
<dbReference type="InterPro" id="IPR036897">
    <property type="entry name" value="CarbamoylP_synth_lsu_oligo_sf"/>
</dbReference>
<dbReference type="InterPro" id="IPR006274">
    <property type="entry name" value="CarbamoylP_synth_ssu"/>
</dbReference>
<dbReference type="InterPro" id="IPR002474">
    <property type="entry name" value="CarbamoylP_synth_ssu_N"/>
</dbReference>
<dbReference type="InterPro" id="IPR036480">
    <property type="entry name" value="CarbP_synth_ssu_N_sf"/>
</dbReference>
<dbReference type="InterPro" id="IPR005479">
    <property type="entry name" value="CbamoylP_synth_lsu-like_ATP-bd"/>
</dbReference>
<dbReference type="InterPro" id="IPR005483">
    <property type="entry name" value="CbamoylP_synth_lsu_CPSase_dom"/>
</dbReference>
<dbReference type="InterPro" id="IPR029062">
    <property type="entry name" value="Class_I_gatase-like"/>
</dbReference>
<dbReference type="InterPro" id="IPR035686">
    <property type="entry name" value="CPSase_GATase1"/>
</dbReference>
<dbReference type="InterPro" id="IPR002195">
    <property type="entry name" value="Dihydroorotase_CS"/>
</dbReference>
<dbReference type="InterPro" id="IPR017926">
    <property type="entry name" value="GATASE"/>
</dbReference>
<dbReference type="InterPro" id="IPR011059">
    <property type="entry name" value="Metal-dep_hydrolase_composite"/>
</dbReference>
<dbReference type="InterPro" id="IPR032466">
    <property type="entry name" value="Metal_Hydrolase"/>
</dbReference>
<dbReference type="InterPro" id="IPR011607">
    <property type="entry name" value="MGS-like_dom"/>
</dbReference>
<dbReference type="InterPro" id="IPR036914">
    <property type="entry name" value="MGS-like_dom_sf"/>
</dbReference>
<dbReference type="InterPro" id="IPR016185">
    <property type="entry name" value="PreATP-grasp_dom_sf"/>
</dbReference>
<dbReference type="NCBIfam" id="TIGR00670">
    <property type="entry name" value="asp_carb_tr"/>
    <property type="match status" value="1"/>
</dbReference>
<dbReference type="NCBIfam" id="TIGR01369">
    <property type="entry name" value="CPSaseII_lrg"/>
    <property type="match status" value="1"/>
</dbReference>
<dbReference type="NCBIfam" id="TIGR01368">
    <property type="entry name" value="CPSaseIIsmall"/>
    <property type="match status" value="1"/>
</dbReference>
<dbReference type="NCBIfam" id="NF002032">
    <property type="entry name" value="PRK00856.1"/>
    <property type="match status" value="1"/>
</dbReference>
<dbReference type="NCBIfam" id="NF003671">
    <property type="entry name" value="PRK05294.1"/>
    <property type="match status" value="1"/>
</dbReference>
<dbReference type="NCBIfam" id="NF009455">
    <property type="entry name" value="PRK12815.1"/>
    <property type="match status" value="1"/>
</dbReference>
<dbReference type="NCBIfam" id="NF009475">
    <property type="entry name" value="PRK12838.1"/>
    <property type="match status" value="1"/>
</dbReference>
<dbReference type="PANTHER" id="PTHR11405:SF4">
    <property type="entry name" value="CARBAMOYL-PHOSPHATE SYNTHASE ARGININE-SPECIFIC SMALL CHAIN"/>
    <property type="match status" value="1"/>
</dbReference>
<dbReference type="PANTHER" id="PTHR11405">
    <property type="entry name" value="CARBAMOYLTRANSFERASE FAMILY MEMBER"/>
    <property type="match status" value="1"/>
</dbReference>
<dbReference type="Pfam" id="PF01979">
    <property type="entry name" value="Amidohydro_1"/>
    <property type="match status" value="1"/>
</dbReference>
<dbReference type="Pfam" id="PF02786">
    <property type="entry name" value="CPSase_L_D2"/>
    <property type="match status" value="2"/>
</dbReference>
<dbReference type="Pfam" id="PF02787">
    <property type="entry name" value="CPSase_L_D3"/>
    <property type="match status" value="1"/>
</dbReference>
<dbReference type="Pfam" id="PF00988">
    <property type="entry name" value="CPSase_sm_chain"/>
    <property type="match status" value="1"/>
</dbReference>
<dbReference type="Pfam" id="PF00117">
    <property type="entry name" value="GATase"/>
    <property type="match status" value="1"/>
</dbReference>
<dbReference type="Pfam" id="PF02142">
    <property type="entry name" value="MGS"/>
    <property type="match status" value="1"/>
</dbReference>
<dbReference type="Pfam" id="PF00185">
    <property type="entry name" value="OTCace"/>
    <property type="match status" value="1"/>
</dbReference>
<dbReference type="Pfam" id="PF02729">
    <property type="entry name" value="OTCace_N"/>
    <property type="match status" value="1"/>
</dbReference>
<dbReference type="PRINTS" id="PR00100">
    <property type="entry name" value="AOTCASE"/>
</dbReference>
<dbReference type="PRINTS" id="PR00101">
    <property type="entry name" value="ATCASE"/>
</dbReference>
<dbReference type="PRINTS" id="PR00098">
    <property type="entry name" value="CPSASE"/>
</dbReference>
<dbReference type="PRINTS" id="PR00099">
    <property type="entry name" value="CPSGATASE"/>
</dbReference>
<dbReference type="SMART" id="SM01096">
    <property type="entry name" value="CPSase_L_D3"/>
    <property type="match status" value="1"/>
</dbReference>
<dbReference type="SMART" id="SM01097">
    <property type="entry name" value="CPSase_sm_chain"/>
    <property type="match status" value="1"/>
</dbReference>
<dbReference type="SMART" id="SM00851">
    <property type="entry name" value="MGS"/>
    <property type="match status" value="1"/>
</dbReference>
<dbReference type="SUPFAM" id="SSF53671">
    <property type="entry name" value="Aspartate/ornithine carbamoyltransferase"/>
    <property type="match status" value="1"/>
</dbReference>
<dbReference type="SUPFAM" id="SSF48108">
    <property type="entry name" value="Carbamoyl phosphate synthetase, large subunit connection domain"/>
    <property type="match status" value="1"/>
</dbReference>
<dbReference type="SUPFAM" id="SSF52021">
    <property type="entry name" value="Carbamoyl phosphate synthetase, small subunit N-terminal domain"/>
    <property type="match status" value="1"/>
</dbReference>
<dbReference type="SUPFAM" id="SSF52317">
    <property type="entry name" value="Class I glutamine amidotransferase-like"/>
    <property type="match status" value="1"/>
</dbReference>
<dbReference type="SUPFAM" id="SSF51338">
    <property type="entry name" value="Composite domain of metallo-dependent hydrolases"/>
    <property type="match status" value="1"/>
</dbReference>
<dbReference type="SUPFAM" id="SSF56059">
    <property type="entry name" value="Glutathione synthetase ATP-binding domain-like"/>
    <property type="match status" value="2"/>
</dbReference>
<dbReference type="SUPFAM" id="SSF51556">
    <property type="entry name" value="Metallo-dependent hydrolases"/>
    <property type="match status" value="1"/>
</dbReference>
<dbReference type="SUPFAM" id="SSF52335">
    <property type="entry name" value="Methylglyoxal synthase-like"/>
    <property type="match status" value="1"/>
</dbReference>
<dbReference type="SUPFAM" id="SSF52440">
    <property type="entry name" value="PreATP-grasp domain"/>
    <property type="match status" value="2"/>
</dbReference>
<dbReference type="PROSITE" id="PS50975">
    <property type="entry name" value="ATP_GRASP"/>
    <property type="match status" value="2"/>
</dbReference>
<dbReference type="PROSITE" id="PS00097">
    <property type="entry name" value="CARBAMOYLTRANSFERASE"/>
    <property type="match status" value="1"/>
</dbReference>
<dbReference type="PROSITE" id="PS00866">
    <property type="entry name" value="CPSASE_1"/>
    <property type="match status" value="1"/>
</dbReference>
<dbReference type="PROSITE" id="PS00867">
    <property type="entry name" value="CPSASE_2"/>
    <property type="match status" value="2"/>
</dbReference>
<dbReference type="PROSITE" id="PS00482">
    <property type="entry name" value="DIHYDROOROTASE_1"/>
    <property type="match status" value="1"/>
</dbReference>
<dbReference type="PROSITE" id="PS00483">
    <property type="entry name" value="DIHYDROOROTASE_2"/>
    <property type="match status" value="1"/>
</dbReference>
<dbReference type="PROSITE" id="PS51273">
    <property type="entry name" value="GATASE_TYPE_1"/>
    <property type="match status" value="1"/>
</dbReference>
<dbReference type="PROSITE" id="PS51855">
    <property type="entry name" value="MGS"/>
    <property type="match status" value="1"/>
</dbReference>
<evidence type="ECO:0000250" key="1">
    <source>
        <dbReference type="UniProtKB" id="P00968"/>
    </source>
</evidence>
<evidence type="ECO:0000250" key="2">
    <source>
        <dbReference type="UniProtKB" id="P05020"/>
    </source>
</evidence>
<evidence type="ECO:0000250" key="3">
    <source>
        <dbReference type="UniProtKB" id="P07259"/>
    </source>
</evidence>
<evidence type="ECO:0000250" key="4">
    <source>
        <dbReference type="UniProtKB" id="P08955"/>
    </source>
</evidence>
<evidence type="ECO:0000250" key="5">
    <source>
        <dbReference type="UniProtKB" id="P0A6F1"/>
    </source>
</evidence>
<evidence type="ECO:0000250" key="6">
    <source>
        <dbReference type="UniProtKB" id="P0A786"/>
    </source>
</evidence>
<evidence type="ECO:0000250" key="7">
    <source>
        <dbReference type="UniProtKB" id="P27708"/>
    </source>
</evidence>
<evidence type="ECO:0000255" key="8">
    <source>
        <dbReference type="PROSITE-ProRule" id="PRU00409"/>
    </source>
</evidence>
<evidence type="ECO:0000255" key="9">
    <source>
        <dbReference type="PROSITE-ProRule" id="PRU00605"/>
    </source>
</evidence>
<evidence type="ECO:0000255" key="10">
    <source>
        <dbReference type="PROSITE-ProRule" id="PRU01202"/>
    </source>
</evidence>
<evidence type="ECO:0000256" key="11">
    <source>
        <dbReference type="SAM" id="MobiDB-lite"/>
    </source>
</evidence>
<evidence type="ECO:0000269" key="12">
    <source>
    </source>
</evidence>
<evidence type="ECO:0000269" key="13">
    <source>
    </source>
</evidence>
<evidence type="ECO:0000305" key="14"/>
<name>PYR1_DROME</name>
<proteinExistence type="evidence at protein level"/>
<gene>
    <name type="primary">r</name>
    <name type="ORF">CG18572</name>
</gene>
<sequence length="2224" mass="246672">MASTDCYLALEDGTVLPGYSFGYVPSENESKVGFGGEVVFQTGMVGYTEALTDRSYSGQILVLTYPLIGNYGVPAPDEDEHGLPLHFEWMKGVVQATALVVGEVAEEAFHWRKWKTLPDWLKQHKVPGIQDIDTRALTKKLREQGSMLGKIVYEKPPVEGLPKSSFVDPNVRNLAKECSVKERQVYGNPNGKGPRIAILDCGLKLNQLRCLLQRGASVTLLPWSARLEDEQFDALFLSNGPGNPESCDQIVQQVRKVIEEGQKPVFGICLGHQLLAKAIGCSTYKMKYGNRGHNLPCLHRATGRCLMTSQNHGYAVDLEQLPDGWSELFVNANDGTNEGIVHASKPYFSVQFHPEHHAGPQDTEFLFDVFMESIQQKDLTIPQLIEQRLRPTTPAIDSAPVMPRKVLILGSGGLSIGQAGEFDYSGSQAIKAMRESNIQTVLINPNIATVQTSKGMADKCYFLPLTPHYVEQVIKSERPNGVLLTFGGQTALNCGVQLERAGVFSKYNVRILGTPIQSIIETEDRKLFAERVNEIGEQVAPSEAVYSVAQALDAASRLGYPVMARAAFSLGGLGSGFANNEEELQSLAQQALAHSSQLIVDKSLKGWKEVEYEVVRDAYNNCITVCNMENFDPLGIHTGESIVVAPSQTLSDREYQMLRSTALKVIRHFGVVGECNIQYALCPHSEQYYIIEVNARLSRSSALASKATGYPLAYVAAKLALGLPLPDIKNSVTGNTTACFEPSLDYCVVKIPRWDLAKFVRVSKHIGSSMKSVGEVMAIGRNFEEAFQKALRMVDSDVLGFDPDVVPLNKEQLAEQLSEPTDRRPFVIAAALQLGMSLRELHQLTNIDYWFLEKLERIILLQSLLTRNGSRTDAALLLKAKRFGFSDKQIAKYIKSTELAVRHQRQEFGIRPHVKQIDTVAGEWPASTNYLYHTYNGSEHDVDFPGGHTIVVGSGVYRIGSSVEFDWCAVGCLRELRKLQRPTIMINYNPETVSTDYDMCDRLYFEEISFEVVMDIYEMENSEGIILSMGGQLPNNIAMDLHRQQAKVLGTSPESIDCAENRFKFSRMLDRKGILQPRWKELTNLQSAIEFCEEVGYPCLVRPSYVLSGAAMNVAYSNQDLETYLNAASEVSREHPVVISKFLTEAKEIDVDAVASDGRILCMAVSEHVENAGVHSGDATLVTPPQDLNAETLEAIKRITCDLASVLDVTGPFNMQLIAKNNELKVIECNVRVSRSFPFVSKTLDHDFVATATRAIVGLDVEPLDVLHGVGKVGVKVPQFSFSRLAGADVQLGVEMASTGEVACFGDNRYEAYLKAMMSTGFQIPKNAVLLSIGSFKHKMELLPSIRDLAKMGYKLYASMGTGDFYAEHGVNVESVQWTFDKTTPDDINGELRHLAEFLANKQFDLVINLPMSGGGARRVSSFMTHGYRTRRLAVDYSIPLVTDVKCTKLLVESMRMNGGKPPMKTHTDCMTSRRIVKLPGFIDVHVHLREPGATHKEDFASGTAAALAGGVTLVCAMPNTNPSIVDRETFTQFQELAKAGARCDYALYVGASDDNWAQVNELASHACGLKMYLNDTFGTLKLSDMTSWQRHLSHWPKRSPIVCHAERQSTAAVIMLAHLLDRSVHICHVARKEEIQLIRSAKEKGVKVTCEVCPHHLFLSTKDVERLGHGMSEVRPLLCSPEDQEALWENIDYIDVFATDHAPHTLAEKRSERPPPGFPGVETILPLLLQAVHEGRLTMEDIKRKFHRNPKIIFNLPDQAQTYVEVDLDEEWTITGNEMKSKSGWTPFEGTKVKGRVHRVVLRGEVAFVDGQVLVQPGFGQNVRPKQSPLASEASQDLLPSDNDANDTFTRLLTSEGPGGGVHGISTKVHFVDGANFLRPNSPSPRIRLDSASNTTLREYLQRTTNSNPVAHSLMGKHILAVDMFNKDHLNDIFNLAQLLKLRGTKDRPVDELLPGKIMASVFYEVSTRTQCSFAAAMLRLGGRVISMDNITSSVKKGESLEDSIKVVSSYADVVVLRHPSPGAVARAATFSRKPLINAGDGVGEHPTQALLDIFTIREEFGTVNGLTITMVGDLKNGRTVHSLARLLTLYNVNLQYVAPNSLQMPDEVVQFVHQRGVKQLFARDLKNVLPDTDVLYMTRIQRERFDNVEDYEKCCGHLVLTPEHMMRAKKRSIVLHPLPRLNEISREIDSDPRAAYFRQAEYGMYIRMALLAMVVGGRNTAL</sequence>
<protein>
    <recommendedName>
        <fullName evidence="14">Multifunctional protein r</fullName>
    </recommendedName>
    <alternativeName>
        <fullName>Protein rudimentary</fullName>
    </alternativeName>
    <domain>
        <recommendedName>
            <fullName>Glutamine-dependent carbamoyl-phosphate synthase</fullName>
            <ecNumber evidence="12">6.3.5.5</ecNumber>
        </recommendedName>
    </domain>
    <domain>
        <recommendedName>
            <fullName>Glutamine amidotransferase</fullName>
            <shortName>GATase</shortName>
            <shortName>GLNase</shortName>
            <ecNumber evidence="3">3.5.1.2</ecNumber>
        </recommendedName>
    </domain>
    <domain>
        <recommendedName>
            <fullName>Ammonium-dependent carbamoyl phosphate synthase</fullName>
            <shortName>CPS</shortName>
            <shortName>CPSase</shortName>
            <ecNumber evidence="3">6.3.4.16</ecNumber>
        </recommendedName>
    </domain>
    <domain>
        <recommendedName>
            <fullName>Aspartate carbamoyltransferase</fullName>
            <ecNumber evidence="7">2.1.3.2</ecNumber>
        </recommendedName>
    </domain>
    <domain>
        <recommendedName>
            <fullName>Dihydroorotase</fullName>
            <ecNumber evidence="7">3.5.2.3</ecNumber>
        </recommendedName>
    </domain>
</protein>
<comment type="function">
    <text evidence="7">Multifunctional protein that encodes the first 3 enzymatic activities of the de novo pyrimidine pathway: carbamoylphosphate synthetase (CPSase; EC 6.3.5.5), aspartate transcarbamylase (ATCase; EC 2.1.3.2) and dihydroorotase (DHOase; EC 3.5.2.3). The CPSase-function is accomplished in 2 steps, by a glutamine-dependent amidotransferase activity (GATase) that binds and cleaves glutamine to produce ammonia, followed by an ammonium-dependent carbamoyl phosphate synthetase, which reacts with the ammonia, hydrogencarbonate and ATP to form carbamoyl phosphate. The endogenously produced carbamoyl phosphate is sequestered and channeled to the ATCase active site. ATCase then catalyzes the formation of carbamoyl-L-aspartate from L-aspartate and carbamoyl phosphate. In the last step, DHOase catalyzes the cyclization of carbamoyl aspartate to dihydroorotate.</text>
</comment>
<comment type="catalytic activity">
    <reaction evidence="12">
        <text>hydrogencarbonate + L-glutamine + 2 ATP + H2O = carbamoyl phosphate + L-glutamate + 2 ADP + phosphate + 2 H(+)</text>
        <dbReference type="Rhea" id="RHEA:18633"/>
        <dbReference type="ChEBI" id="CHEBI:15377"/>
        <dbReference type="ChEBI" id="CHEBI:15378"/>
        <dbReference type="ChEBI" id="CHEBI:17544"/>
        <dbReference type="ChEBI" id="CHEBI:29985"/>
        <dbReference type="ChEBI" id="CHEBI:30616"/>
        <dbReference type="ChEBI" id="CHEBI:43474"/>
        <dbReference type="ChEBI" id="CHEBI:58228"/>
        <dbReference type="ChEBI" id="CHEBI:58359"/>
        <dbReference type="ChEBI" id="CHEBI:456216"/>
        <dbReference type="EC" id="6.3.5.5"/>
    </reaction>
</comment>
<comment type="catalytic activity">
    <reaction evidence="3">
        <text>L-glutamine + H2O = L-glutamate + NH4(+)</text>
        <dbReference type="Rhea" id="RHEA:15889"/>
        <dbReference type="ChEBI" id="CHEBI:15377"/>
        <dbReference type="ChEBI" id="CHEBI:28938"/>
        <dbReference type="ChEBI" id="CHEBI:29985"/>
        <dbReference type="ChEBI" id="CHEBI:58359"/>
        <dbReference type="EC" id="3.5.1.2"/>
    </reaction>
</comment>
<comment type="catalytic activity">
    <reaction evidence="3">
        <text>hydrogencarbonate + NH4(+) + 2 ATP = carbamoyl phosphate + 2 ADP + phosphate + 2 H(+)</text>
        <dbReference type="Rhea" id="RHEA:18029"/>
        <dbReference type="ChEBI" id="CHEBI:15378"/>
        <dbReference type="ChEBI" id="CHEBI:17544"/>
        <dbReference type="ChEBI" id="CHEBI:28938"/>
        <dbReference type="ChEBI" id="CHEBI:30616"/>
        <dbReference type="ChEBI" id="CHEBI:43474"/>
        <dbReference type="ChEBI" id="CHEBI:58228"/>
        <dbReference type="ChEBI" id="CHEBI:456216"/>
        <dbReference type="EC" id="6.3.4.16"/>
    </reaction>
</comment>
<comment type="catalytic activity">
    <reaction evidence="7">
        <text>carbamoyl phosphate + L-aspartate = N-carbamoyl-L-aspartate + phosphate + H(+)</text>
        <dbReference type="Rhea" id="RHEA:20013"/>
        <dbReference type="ChEBI" id="CHEBI:15378"/>
        <dbReference type="ChEBI" id="CHEBI:29991"/>
        <dbReference type="ChEBI" id="CHEBI:32814"/>
        <dbReference type="ChEBI" id="CHEBI:43474"/>
        <dbReference type="ChEBI" id="CHEBI:58228"/>
        <dbReference type="EC" id="2.1.3.2"/>
    </reaction>
</comment>
<comment type="catalytic activity">
    <reaction evidence="7">
        <text>(S)-dihydroorotate + H2O = N-carbamoyl-L-aspartate + H(+)</text>
        <dbReference type="Rhea" id="RHEA:24296"/>
        <dbReference type="ChEBI" id="CHEBI:15377"/>
        <dbReference type="ChEBI" id="CHEBI:15378"/>
        <dbReference type="ChEBI" id="CHEBI:30864"/>
        <dbReference type="ChEBI" id="CHEBI:32814"/>
        <dbReference type="EC" id="3.5.2.3"/>
    </reaction>
</comment>
<comment type="cofactor">
    <cofactor evidence="8">
        <name>Mg(2+)</name>
        <dbReference type="ChEBI" id="CHEBI:18420"/>
    </cofactor>
    <cofactor evidence="8">
        <name>Mn(2+)</name>
        <dbReference type="ChEBI" id="CHEBI:29035"/>
    </cofactor>
    <text evidence="8">Binds 4 magnesium or manganese ions per subunit.</text>
</comment>
<comment type="cofactor">
    <cofactor evidence="7">
        <name>Zn(2+)</name>
        <dbReference type="ChEBI" id="CHEBI:29105"/>
    </cofactor>
    <text evidence="7">Binds 3 Zn(2+) ions per subunit (for dihydroorotase activity).</text>
</comment>
<comment type="pathway">
    <text evidence="7">Pyrimidine metabolism; UMP biosynthesis via de novo pathway; (S)-dihydroorotate from bicarbonate: step 1/3.</text>
</comment>
<comment type="pathway">
    <text evidence="7">Pyrimidine metabolism; UMP biosynthesis via de novo pathway; (S)-dihydroorotate from bicarbonate: step 2/3.</text>
</comment>
<comment type="pathway">
    <text evidence="7">Pyrimidine metabolism; UMP biosynthesis via de novo pathway; (S)-dihydroorotate from bicarbonate: step 3/3.</text>
</comment>
<comment type="subcellular location">
    <subcellularLocation>
        <location>Cytoplasm</location>
    </subcellularLocation>
</comment>
<comment type="miscellaneous">
    <text evidence="3">GATase (glutamine amidotransferase) and CPSase (carbamoyl phosphate synthase) together form the glutamine-dependent CPSase (GD-CPSase) (EC 6.3.5.5).</text>
</comment>
<comment type="similarity">
    <text evidence="14">In the N-terminal section; belongs to the CarA family.</text>
</comment>
<comment type="similarity">
    <text evidence="14">In the 2nd section; belongs to the CarB family.</text>
</comment>
<comment type="similarity">
    <text evidence="14">In the 3rd section; belongs to the metallo-dependent hydrolases superfamily. DHOase family. CAD subfamily.</text>
</comment>
<comment type="similarity">
    <text evidence="14">In the C-terminal section; belongs to the aspartate/ornithine carbamoyltransferase superfamily. ATCase family.</text>
</comment>
<comment type="sequence caution" evidence="14">
    <conflict type="miscellaneous discrepancy">
        <sequence resource="EMBL-CDS" id="AAA28873"/>
    </conflict>
    <text>Various problems, including DNA not present in the genome.</text>
</comment>
<comment type="sequence caution" evidence="14">
    <conflict type="erroneous initiation">
        <sequence resource="EMBL-CDS" id="AAL90298"/>
    </conflict>
    <text>Truncated N-terminus.</text>
</comment>
<comment type="sequence caution" evidence="14">
    <conflict type="miscellaneous discrepancy">
        <sequence resource="EMBL-CDS" id="CAA27509"/>
    </conflict>
    <text>Various problems, including DNA not present in the genome.</text>
</comment>
<comment type="sequence caution" evidence="14">
    <conflict type="miscellaneous discrepancy">
        <sequence resource="EMBL-CDS" id="CAA27510"/>
    </conflict>
    <text>Various problems, including DNA not present in the genome.</text>
</comment>
<comment type="sequence caution" evidence="14">
    <conflict type="miscellaneous discrepancy">
        <sequence resource="EMBL-CDS" id="CAA27511"/>
    </conflict>
    <text>Various problems, including DNA not present in the genome.</text>
</comment>
<comment type="sequence caution" evidence="14">
    <conflict type="miscellaneous discrepancy">
        <sequence resource="EMBL-CDS" id="CAA27513"/>
    </conflict>
    <text>Various problems, including DNA not present in the genome.</text>
</comment>
<comment type="sequence caution" evidence="14">
    <conflict type="miscellaneous discrepancy">
        <sequence resource="EMBL-CDS" id="CAA28502"/>
    </conflict>
    <text>Various problems, including DNA not present in the genome.</text>
</comment>
<keyword id="KW-0067">ATP-binding</keyword>
<keyword id="KW-0963">Cytoplasm</keyword>
<keyword id="KW-0315">Glutamine amidotransferase</keyword>
<keyword id="KW-0378">Hydrolase</keyword>
<keyword id="KW-0436">Ligase</keyword>
<keyword id="KW-0460">Magnesium</keyword>
<keyword id="KW-0464">Manganese</keyword>
<keyword id="KW-0479">Metal-binding</keyword>
<keyword id="KW-0511">Multifunctional enzyme</keyword>
<keyword id="KW-0547">Nucleotide-binding</keyword>
<keyword id="KW-0597">Phosphoprotein</keyword>
<keyword id="KW-0665">Pyrimidine biosynthesis</keyword>
<keyword id="KW-1185">Reference proteome</keyword>
<keyword id="KW-0677">Repeat</keyword>
<keyword id="KW-0808">Transferase</keyword>
<keyword id="KW-0862">Zinc</keyword>
<accession>P05990</accession>
<accession>B5X540</accession>
<accession>O97163</accession>
<accession>Q26376</accession>
<accession>Q7KUX4</accession>
<accession>Q8SXM0</accession>
<accession>Q9VXD5</accession>
<organism>
    <name type="scientific">Drosophila melanogaster</name>
    <name type="common">Fruit fly</name>
    <dbReference type="NCBI Taxonomy" id="7227"/>
    <lineage>
        <taxon>Eukaryota</taxon>
        <taxon>Metazoa</taxon>
        <taxon>Ecdysozoa</taxon>
        <taxon>Arthropoda</taxon>
        <taxon>Hexapoda</taxon>
        <taxon>Insecta</taxon>
        <taxon>Pterygota</taxon>
        <taxon>Neoptera</taxon>
        <taxon>Endopterygota</taxon>
        <taxon>Diptera</taxon>
        <taxon>Brachycera</taxon>
        <taxon>Muscomorpha</taxon>
        <taxon>Ephydroidea</taxon>
        <taxon>Drosophilidae</taxon>
        <taxon>Drosophila</taxon>
        <taxon>Sophophora</taxon>
    </lineage>
</organism>
<reference key="1">
    <citation type="journal article" date="1987" name="J. Mol. Biol.">
        <title>The rudimentary gene of Drosophila melanogaster encodes four enzymic functions.</title>
        <authorList>
            <person name="Freund J.-N."/>
            <person name="Jarry B.P."/>
        </authorList>
    </citation>
    <scope>NUCLEOTIDE SEQUENCE [GENOMIC DNA]</scope>
</reference>
<reference key="2">
    <citation type="journal article" date="1986" name="J. Mol. Biol.">
        <title>Molecular organization of the rudimentary gene of Drosophila melanogaster.</title>
        <authorList>
            <person name="Freund J.-N."/>
            <person name="Zerges W."/>
            <person name="Schedl P."/>
            <person name="Jarry B.P."/>
        </authorList>
    </citation>
    <scope>PARTIAL NUCLEOTIDE SEQUENCE [GENOMIC DNA]</scope>
</reference>
<reference key="3">
    <citation type="journal article" date="1986" name="J. Mol. Biol.">
        <authorList>
            <person name="Freund J.-N."/>
            <person name="Zerges W."/>
            <person name="Schedl P."/>
            <person name="Jarry B.P."/>
        </authorList>
    </citation>
    <scope>ERRATUM OF PUBMED:3023623</scope>
</reference>
<reference key="4">
    <citation type="journal article" date="2000" name="Science">
        <title>The genome sequence of Drosophila melanogaster.</title>
        <authorList>
            <person name="Adams M.D."/>
            <person name="Celniker S.E."/>
            <person name="Holt R.A."/>
            <person name="Evans C.A."/>
            <person name="Gocayne J.D."/>
            <person name="Amanatides P.G."/>
            <person name="Scherer S.E."/>
            <person name="Li P.W."/>
            <person name="Hoskins R.A."/>
            <person name="Galle R.F."/>
            <person name="George R.A."/>
            <person name="Lewis S.E."/>
            <person name="Richards S."/>
            <person name="Ashburner M."/>
            <person name="Henderson S.N."/>
            <person name="Sutton G.G."/>
            <person name="Wortman J.R."/>
            <person name="Yandell M.D."/>
            <person name="Zhang Q."/>
            <person name="Chen L.X."/>
            <person name="Brandon R.C."/>
            <person name="Rogers Y.-H.C."/>
            <person name="Blazej R.G."/>
            <person name="Champe M."/>
            <person name="Pfeiffer B.D."/>
            <person name="Wan K.H."/>
            <person name="Doyle C."/>
            <person name="Baxter E.G."/>
            <person name="Helt G."/>
            <person name="Nelson C.R."/>
            <person name="Miklos G.L.G."/>
            <person name="Abril J.F."/>
            <person name="Agbayani A."/>
            <person name="An H.-J."/>
            <person name="Andrews-Pfannkoch C."/>
            <person name="Baldwin D."/>
            <person name="Ballew R.M."/>
            <person name="Basu A."/>
            <person name="Baxendale J."/>
            <person name="Bayraktaroglu L."/>
            <person name="Beasley E.M."/>
            <person name="Beeson K.Y."/>
            <person name="Benos P.V."/>
            <person name="Berman B.P."/>
            <person name="Bhandari D."/>
            <person name="Bolshakov S."/>
            <person name="Borkova D."/>
            <person name="Botchan M.R."/>
            <person name="Bouck J."/>
            <person name="Brokstein P."/>
            <person name="Brottier P."/>
            <person name="Burtis K.C."/>
            <person name="Busam D.A."/>
            <person name="Butler H."/>
            <person name="Cadieu E."/>
            <person name="Center A."/>
            <person name="Chandra I."/>
            <person name="Cherry J.M."/>
            <person name="Cawley S."/>
            <person name="Dahlke C."/>
            <person name="Davenport L.B."/>
            <person name="Davies P."/>
            <person name="de Pablos B."/>
            <person name="Delcher A."/>
            <person name="Deng Z."/>
            <person name="Mays A.D."/>
            <person name="Dew I."/>
            <person name="Dietz S.M."/>
            <person name="Dodson K."/>
            <person name="Doup L.E."/>
            <person name="Downes M."/>
            <person name="Dugan-Rocha S."/>
            <person name="Dunkov B.C."/>
            <person name="Dunn P."/>
            <person name="Durbin K.J."/>
            <person name="Evangelista C.C."/>
            <person name="Ferraz C."/>
            <person name="Ferriera S."/>
            <person name="Fleischmann W."/>
            <person name="Fosler C."/>
            <person name="Gabrielian A.E."/>
            <person name="Garg N.S."/>
            <person name="Gelbart W.M."/>
            <person name="Glasser K."/>
            <person name="Glodek A."/>
            <person name="Gong F."/>
            <person name="Gorrell J.H."/>
            <person name="Gu Z."/>
            <person name="Guan P."/>
            <person name="Harris M."/>
            <person name="Harris N.L."/>
            <person name="Harvey D.A."/>
            <person name="Heiman T.J."/>
            <person name="Hernandez J.R."/>
            <person name="Houck J."/>
            <person name="Hostin D."/>
            <person name="Houston K.A."/>
            <person name="Howland T.J."/>
            <person name="Wei M.-H."/>
            <person name="Ibegwam C."/>
            <person name="Jalali M."/>
            <person name="Kalush F."/>
            <person name="Karpen G.H."/>
            <person name="Ke Z."/>
            <person name="Kennison J.A."/>
            <person name="Ketchum K.A."/>
            <person name="Kimmel B.E."/>
            <person name="Kodira C.D."/>
            <person name="Kraft C.L."/>
            <person name="Kravitz S."/>
            <person name="Kulp D."/>
            <person name="Lai Z."/>
            <person name="Lasko P."/>
            <person name="Lei Y."/>
            <person name="Levitsky A.A."/>
            <person name="Li J.H."/>
            <person name="Li Z."/>
            <person name="Liang Y."/>
            <person name="Lin X."/>
            <person name="Liu X."/>
            <person name="Mattei B."/>
            <person name="McIntosh T.C."/>
            <person name="McLeod M.P."/>
            <person name="McPherson D."/>
            <person name="Merkulov G."/>
            <person name="Milshina N.V."/>
            <person name="Mobarry C."/>
            <person name="Morris J."/>
            <person name="Moshrefi A."/>
            <person name="Mount S.M."/>
            <person name="Moy M."/>
            <person name="Murphy B."/>
            <person name="Murphy L."/>
            <person name="Muzny D.M."/>
            <person name="Nelson D.L."/>
            <person name="Nelson D.R."/>
            <person name="Nelson K.A."/>
            <person name="Nixon K."/>
            <person name="Nusskern D.R."/>
            <person name="Pacleb J.M."/>
            <person name="Palazzolo M."/>
            <person name="Pittman G.S."/>
            <person name="Pan S."/>
            <person name="Pollard J."/>
            <person name="Puri V."/>
            <person name="Reese M.G."/>
            <person name="Reinert K."/>
            <person name="Remington K."/>
            <person name="Saunders R.D.C."/>
            <person name="Scheeler F."/>
            <person name="Shen H."/>
            <person name="Shue B.C."/>
            <person name="Siden-Kiamos I."/>
            <person name="Simpson M."/>
            <person name="Skupski M.P."/>
            <person name="Smith T.J."/>
            <person name="Spier E."/>
            <person name="Spradling A.C."/>
            <person name="Stapleton M."/>
            <person name="Strong R."/>
            <person name="Sun E."/>
            <person name="Svirskas R."/>
            <person name="Tector C."/>
            <person name="Turner R."/>
            <person name="Venter E."/>
            <person name="Wang A.H."/>
            <person name="Wang X."/>
            <person name="Wang Z.-Y."/>
            <person name="Wassarman D.A."/>
            <person name="Weinstock G.M."/>
            <person name="Weissenbach J."/>
            <person name="Williams S.M."/>
            <person name="Woodage T."/>
            <person name="Worley K.C."/>
            <person name="Wu D."/>
            <person name="Yang S."/>
            <person name="Yao Q.A."/>
            <person name="Ye J."/>
            <person name="Yeh R.-F."/>
            <person name="Zaveri J.S."/>
            <person name="Zhan M."/>
            <person name="Zhang G."/>
            <person name="Zhao Q."/>
            <person name="Zheng L."/>
            <person name="Zheng X.H."/>
            <person name="Zhong F.N."/>
            <person name="Zhong W."/>
            <person name="Zhou X."/>
            <person name="Zhu S.C."/>
            <person name="Zhu X."/>
            <person name="Smith H.O."/>
            <person name="Gibbs R.A."/>
            <person name="Myers E.W."/>
            <person name="Rubin G.M."/>
            <person name="Venter J.C."/>
        </authorList>
    </citation>
    <scope>NUCLEOTIDE SEQUENCE [LARGE SCALE GENOMIC DNA]</scope>
    <source>
        <strain>Berkeley</strain>
    </source>
</reference>
<reference key="5">
    <citation type="journal article" date="2002" name="Genome Biol.">
        <title>Annotation of the Drosophila melanogaster euchromatic genome: a systematic review.</title>
        <authorList>
            <person name="Misra S."/>
            <person name="Crosby M.A."/>
            <person name="Mungall C.J."/>
            <person name="Matthews B.B."/>
            <person name="Campbell K.S."/>
            <person name="Hradecky P."/>
            <person name="Huang Y."/>
            <person name="Kaminker J.S."/>
            <person name="Millburn G.H."/>
            <person name="Prochnik S.E."/>
            <person name="Smith C.D."/>
            <person name="Tupy J.L."/>
            <person name="Whitfield E.J."/>
            <person name="Bayraktaroglu L."/>
            <person name="Berman B.P."/>
            <person name="Bettencourt B.R."/>
            <person name="Celniker S.E."/>
            <person name="de Grey A.D.N.J."/>
            <person name="Drysdale R.A."/>
            <person name="Harris N.L."/>
            <person name="Richter J."/>
            <person name="Russo S."/>
            <person name="Schroeder A.J."/>
            <person name="Shu S.Q."/>
            <person name="Stapleton M."/>
            <person name="Yamada C."/>
            <person name="Ashburner M."/>
            <person name="Gelbart W.M."/>
            <person name="Rubin G.M."/>
            <person name="Lewis S.E."/>
        </authorList>
    </citation>
    <scope>GENOME REANNOTATION</scope>
    <source>
        <strain>Berkeley</strain>
    </source>
</reference>
<reference key="6">
    <citation type="submission" date="2008-10" db="EMBL/GenBank/DDBJ databases">
        <authorList>
            <person name="Carlson J.W."/>
            <person name="Booth B."/>
            <person name="Frise E."/>
            <person name="Park S."/>
            <person name="Wan K.H."/>
            <person name="Yu C."/>
            <person name="Celniker S.E."/>
        </authorList>
    </citation>
    <scope>NUCLEOTIDE SEQUENCE [LARGE SCALE MRNA]</scope>
    <source>
        <strain>Berkeley</strain>
        <tissue>Larva</tissue>
        <tissue>Pupae</tissue>
    </source>
</reference>
<reference key="7">
    <citation type="journal article" date="1992" name="Nucleic Acids Res.">
        <title>Molecular characterization of the 5' end of the rudimentary gene in Drosophila and analysis of three P element insertions.</title>
        <authorList>
            <person name="Zerges W."/>
            <person name="Udvardy A."/>
            <person name="Schedl P."/>
        </authorList>
    </citation>
    <scope>NUCLEOTIDE SEQUENCE [GENOMIC DNA] OF 1-130</scope>
</reference>
<reference key="8">
    <citation type="journal article" date="2002" name="Genome Biol.">
        <title>A Drosophila full-length cDNA resource.</title>
        <authorList>
            <person name="Stapleton M."/>
            <person name="Carlson J.W."/>
            <person name="Brokstein P."/>
            <person name="Yu C."/>
            <person name="Champe M."/>
            <person name="George R.A."/>
            <person name="Guarin H."/>
            <person name="Kronmiller B."/>
            <person name="Pacleb J.M."/>
            <person name="Park S."/>
            <person name="Wan K.H."/>
            <person name="Rubin G.M."/>
            <person name="Celniker S.E."/>
        </authorList>
    </citation>
    <scope>NUCLEOTIDE SEQUENCE [LARGE SCALE MRNA] OF 184-2224</scope>
    <source>
        <strain>Berkeley</strain>
        <tissue>Larva</tissue>
        <tissue>Pupae</tissue>
    </source>
</reference>
<reference key="9">
    <citation type="journal article" date="1999" name="J. Mol. Biol.">
        <title>A mutation that uncouples allosteric regulation of carbamyl phosphate synthetase in Drosophila.</title>
        <authorList>
            <person name="Simmons A.J."/>
            <person name="Rawls J.M."/>
            <person name="Piskur J."/>
            <person name="Davidson J.N."/>
        </authorList>
    </citation>
    <scope>NUCLEOTIDE SEQUENCE [MRNA] OF 898-1649</scope>
    <scope>CPSASE ACTIVITY</scope>
    <scope>MUTAGENESIS OF GLU-1167</scope>
</reference>
<reference key="10">
    <citation type="journal article" date="1994" name="J. Mol. Biol.">
        <title>Revision in sequence of CAD aspartate transcarbamylase domain of Drosophila.</title>
        <authorList>
            <person name="Davidson J.N."/>
            <person name="Kern C.B."/>
        </authorList>
    </citation>
    <scope>SEQUENCE REVISION TO 2066-2146</scope>
</reference>
<reference key="11">
    <citation type="journal article" date="2008" name="J. Proteome Res.">
        <title>Phosphoproteome analysis of Drosophila melanogaster embryos.</title>
        <authorList>
            <person name="Zhai B."/>
            <person name="Villen J."/>
            <person name="Beausoleil S.A."/>
            <person name="Mintseris J."/>
            <person name="Gygi S.P."/>
        </authorList>
    </citation>
    <scope>PHOSPHORYLATION [LARGE SCALE ANALYSIS] AT SER-1883; SER-1885; SER-1892 AND SER-1894</scope>
    <scope>IDENTIFICATION BY MASS SPECTROMETRY</scope>
    <source>
        <tissue>Embryo</tissue>
    </source>
</reference>